<accession>O73590</accession>
<comment type="function">
    <text evidence="1">May play a role in neural and muscle differentiation (By similarity). May be involved in transcriptional regulation.</text>
</comment>
<comment type="subcellular location">
    <subcellularLocation>
        <location evidence="6">Nucleus</location>
    </subcellularLocation>
</comment>
<comment type="similarity">
    <text evidence="6">Belongs to the krueppel C2H2-type zinc-finger protein family.</text>
</comment>
<dbReference type="EMBL" id="U26150">
    <property type="protein sequence ID" value="AAC06188.1"/>
    <property type="molecule type" value="mRNA"/>
</dbReference>
<dbReference type="FunCoup" id="O73590">
    <property type="interactions" value="86"/>
</dbReference>
<dbReference type="STRING" id="9031.ENSGALP00000070594"/>
<dbReference type="GlyGen" id="O73590">
    <property type="glycosylation" value="3 sites"/>
</dbReference>
<dbReference type="PaxDb" id="9031-ENSGALP00000025229"/>
<dbReference type="VEuPathDB" id="HostDB:geneid_395904"/>
<dbReference type="eggNOG" id="KOG1146">
    <property type="taxonomic scope" value="Eukaryota"/>
</dbReference>
<dbReference type="InParanoid" id="O73590"/>
<dbReference type="OrthoDB" id="6417226at2759"/>
<dbReference type="PhylomeDB" id="O73590"/>
<dbReference type="Proteomes" id="UP000000539">
    <property type="component" value="Unassembled WGS sequence"/>
</dbReference>
<dbReference type="GO" id="GO:0005634">
    <property type="term" value="C:nucleus"/>
    <property type="evidence" value="ECO:0000318"/>
    <property type="project" value="GO_Central"/>
</dbReference>
<dbReference type="GO" id="GO:0000981">
    <property type="term" value="F:DNA-binding transcription factor activity, RNA polymerase II-specific"/>
    <property type="evidence" value="ECO:0000318"/>
    <property type="project" value="GO_Central"/>
</dbReference>
<dbReference type="GO" id="GO:0000978">
    <property type="term" value="F:RNA polymerase II cis-regulatory region sequence-specific DNA binding"/>
    <property type="evidence" value="ECO:0000318"/>
    <property type="project" value="GO_Central"/>
</dbReference>
<dbReference type="GO" id="GO:0008270">
    <property type="term" value="F:zinc ion binding"/>
    <property type="evidence" value="ECO:0007669"/>
    <property type="project" value="UniProtKB-KW"/>
</dbReference>
<dbReference type="GO" id="GO:0006357">
    <property type="term" value="P:regulation of transcription by RNA polymerase II"/>
    <property type="evidence" value="ECO:0000318"/>
    <property type="project" value="GO_Central"/>
</dbReference>
<dbReference type="CDD" id="cd00086">
    <property type="entry name" value="homeodomain"/>
    <property type="match status" value="4"/>
</dbReference>
<dbReference type="FunFam" id="1.10.10.60:FF:000082">
    <property type="entry name" value="Putative zinc finger homeobox protein 4"/>
    <property type="match status" value="1"/>
</dbReference>
<dbReference type="FunFam" id="3.30.160.60:FF:000429">
    <property type="entry name" value="Zinc finger homeobox protein 3"/>
    <property type="match status" value="1"/>
</dbReference>
<dbReference type="FunFam" id="3.30.160.60:FF:000317">
    <property type="entry name" value="zinc finger homeobox protein 3"/>
    <property type="match status" value="1"/>
</dbReference>
<dbReference type="FunFam" id="1.10.10.60:FF:000064">
    <property type="entry name" value="Zinc finger homeobox protein 4"/>
    <property type="match status" value="1"/>
</dbReference>
<dbReference type="FunFam" id="1.10.10.60:FF:000096">
    <property type="entry name" value="Zinc finger homeobox protein 4"/>
    <property type="match status" value="1"/>
</dbReference>
<dbReference type="FunFam" id="3.30.160.60:FF:000081">
    <property type="entry name" value="Zinc finger homeobox protein 4"/>
    <property type="match status" value="1"/>
</dbReference>
<dbReference type="FunFam" id="3.30.160.60:FF:001440">
    <property type="entry name" value="Zinc finger homeobox protein 4"/>
    <property type="match status" value="1"/>
</dbReference>
<dbReference type="FunFam" id="1.10.10.60:FF:000058">
    <property type="entry name" value="zinc finger homeobox protein 4"/>
    <property type="match status" value="1"/>
</dbReference>
<dbReference type="FunFam" id="3.30.160.60:FF:000446">
    <property type="entry name" value="Zinc finger protein"/>
    <property type="match status" value="1"/>
</dbReference>
<dbReference type="Gene3D" id="3.30.160.60">
    <property type="entry name" value="Classic Zinc Finger"/>
    <property type="match status" value="5"/>
</dbReference>
<dbReference type="Gene3D" id="1.10.10.60">
    <property type="entry name" value="Homeodomain-like"/>
    <property type="match status" value="4"/>
</dbReference>
<dbReference type="InterPro" id="IPR001356">
    <property type="entry name" value="HD"/>
</dbReference>
<dbReference type="InterPro" id="IPR017970">
    <property type="entry name" value="Homeobox_CS"/>
</dbReference>
<dbReference type="InterPro" id="IPR009057">
    <property type="entry name" value="Homeodomain-like_sf"/>
</dbReference>
<dbReference type="InterPro" id="IPR003604">
    <property type="entry name" value="Matrin/U1-like-C_Znf_C2H2"/>
</dbReference>
<dbReference type="InterPro" id="IPR036236">
    <property type="entry name" value="Znf_C2H2_sf"/>
</dbReference>
<dbReference type="InterPro" id="IPR013087">
    <property type="entry name" value="Znf_C2H2_type"/>
</dbReference>
<dbReference type="InterPro" id="IPR051968">
    <property type="entry name" value="ZnFinger_Homeobox_TR"/>
</dbReference>
<dbReference type="PANTHER" id="PTHR45891">
    <property type="entry name" value="ZINC FINGER HOMEOBOX PROTEIN"/>
    <property type="match status" value="1"/>
</dbReference>
<dbReference type="PANTHER" id="PTHR45891:SF2">
    <property type="entry name" value="ZINC FINGER HOMEOBOX PROTEIN 4"/>
    <property type="match status" value="1"/>
</dbReference>
<dbReference type="Pfam" id="PF00046">
    <property type="entry name" value="Homeodomain"/>
    <property type="match status" value="4"/>
</dbReference>
<dbReference type="Pfam" id="PF00096">
    <property type="entry name" value="zf-C2H2"/>
    <property type="match status" value="2"/>
</dbReference>
<dbReference type="Pfam" id="PF24056">
    <property type="entry name" value="zf-C2H2_ZFHX3"/>
    <property type="match status" value="1"/>
</dbReference>
<dbReference type="SMART" id="SM00389">
    <property type="entry name" value="HOX"/>
    <property type="match status" value="4"/>
</dbReference>
<dbReference type="SMART" id="SM00355">
    <property type="entry name" value="ZnF_C2H2"/>
    <property type="match status" value="23"/>
</dbReference>
<dbReference type="SMART" id="SM00451">
    <property type="entry name" value="ZnF_U1"/>
    <property type="match status" value="7"/>
</dbReference>
<dbReference type="SUPFAM" id="SSF57667">
    <property type="entry name" value="beta-beta-alpha zinc fingers"/>
    <property type="match status" value="5"/>
</dbReference>
<dbReference type="SUPFAM" id="SSF46689">
    <property type="entry name" value="Homeodomain-like"/>
    <property type="match status" value="4"/>
</dbReference>
<dbReference type="PROSITE" id="PS00027">
    <property type="entry name" value="HOMEOBOX_1"/>
    <property type="match status" value="2"/>
</dbReference>
<dbReference type="PROSITE" id="PS50071">
    <property type="entry name" value="HOMEOBOX_2"/>
    <property type="match status" value="4"/>
</dbReference>
<dbReference type="PROSITE" id="PS00028">
    <property type="entry name" value="ZINC_FINGER_C2H2_1"/>
    <property type="match status" value="13"/>
</dbReference>
<dbReference type="PROSITE" id="PS50157">
    <property type="entry name" value="ZINC_FINGER_C2H2_2"/>
    <property type="match status" value="7"/>
</dbReference>
<protein>
    <recommendedName>
        <fullName>Zinc finger homeobox protein 4</fullName>
    </recommendedName>
    <alternativeName>
        <fullName>Zinc finger homeodomain protein 4</fullName>
        <shortName>ZFH-4</shortName>
    </alternativeName>
    <alternativeName>
        <fullName>Zinc finger/apterous-related homeobox protein</fullName>
    </alternativeName>
</protein>
<feature type="chain" id="PRO_0000278467" description="Zinc finger homeobox protein 4">
    <location>
        <begin position="1"/>
        <end position="3573"/>
    </location>
</feature>
<feature type="zinc finger region" description="C2H2-type 1" evidence="3">
    <location>
        <begin position="609"/>
        <end position="632"/>
    </location>
</feature>
<feature type="zinc finger region" description="C2H2-type 2" evidence="3">
    <location>
        <begin position="640"/>
        <end position="663"/>
    </location>
</feature>
<feature type="zinc finger region" description="C2H2-type 3" evidence="3">
    <location>
        <begin position="695"/>
        <end position="719"/>
    </location>
</feature>
<feature type="zinc finger region" description="C2H2-type 4; degenerate" evidence="3">
    <location>
        <begin position="763"/>
        <end position="785"/>
    </location>
</feature>
<feature type="zinc finger region" description="C2H2-type 5" evidence="3">
    <location>
        <begin position="913"/>
        <end position="937"/>
    </location>
</feature>
<feature type="zinc finger region" description="C2H2-type 6" evidence="3">
    <location>
        <begin position="969"/>
        <end position="991"/>
    </location>
</feature>
<feature type="zinc finger region" description="C2H2-type 7" evidence="3">
    <location>
        <begin position="1017"/>
        <end position="1041"/>
    </location>
</feature>
<feature type="zinc finger region" description="C2H2-type 8" evidence="3">
    <location>
        <begin position="1168"/>
        <end position="1191"/>
    </location>
</feature>
<feature type="zinc finger region" description="C2H2-type 9" evidence="3">
    <location>
        <begin position="1197"/>
        <end position="1220"/>
    </location>
</feature>
<feature type="zinc finger region" description="C2H2-type 10" evidence="3">
    <location>
        <begin position="1348"/>
        <end position="1370"/>
    </location>
</feature>
<feature type="zinc finger region" description="C2H2-type 11" evidence="3">
    <location>
        <begin position="1376"/>
        <end position="1399"/>
    </location>
</feature>
<feature type="zinc finger region" description="C2H2-type 12" evidence="3">
    <location>
        <begin position="1492"/>
        <end position="1518"/>
    </location>
</feature>
<feature type="zinc finger region" description="C2H2-type 13" evidence="3">
    <location>
        <begin position="1544"/>
        <end position="1568"/>
    </location>
</feature>
<feature type="zinc finger region" description="C2H2-type 14" evidence="3">
    <location>
        <begin position="1886"/>
        <end position="1909"/>
    </location>
</feature>
<feature type="DNA-binding region" description="Homeobox 1" evidence="4">
    <location>
        <begin position="2072"/>
        <end position="2131"/>
    </location>
</feature>
<feature type="DNA-binding region" description="Homeobox 2" evidence="4">
    <location>
        <begin position="2169"/>
        <end position="2228"/>
    </location>
</feature>
<feature type="zinc finger region" description="C2H2-type 15; degenerate" evidence="3">
    <location>
        <begin position="2255"/>
        <end position="2279"/>
    </location>
</feature>
<feature type="zinc finger region" description="C2H2-type 16" evidence="3">
    <location>
        <begin position="2436"/>
        <end position="2458"/>
    </location>
</feature>
<feature type="DNA-binding region" description="Homeobox 3" evidence="4">
    <location>
        <begin position="2548"/>
        <end position="2607"/>
    </location>
</feature>
<feature type="zinc finger region" description="C2H2-type 17" evidence="3">
    <location>
        <begin position="2618"/>
        <end position="2641"/>
    </location>
</feature>
<feature type="DNA-binding region" description="Homeobox 4" evidence="4">
    <location>
        <begin position="2874"/>
        <end position="2933"/>
    </location>
</feature>
<feature type="zinc finger region" description="C2H2-type 18; degenerate" evidence="3">
    <location>
        <begin position="2952"/>
        <end position="2976"/>
    </location>
</feature>
<feature type="zinc finger region" description="C2H2-type 19; degenerate" evidence="3">
    <location>
        <begin position="3360"/>
        <end position="3384"/>
    </location>
</feature>
<feature type="zinc finger region" description="C2H2-type 20" evidence="3">
    <location>
        <begin position="3404"/>
        <end position="3428"/>
    </location>
</feature>
<feature type="region of interest" description="Disordered" evidence="5">
    <location>
        <begin position="1"/>
        <end position="54"/>
    </location>
</feature>
<feature type="region of interest" description="Disordered" evidence="5">
    <location>
        <begin position="425"/>
        <end position="479"/>
    </location>
</feature>
<feature type="region of interest" description="Disordered" evidence="5">
    <location>
        <begin position="522"/>
        <end position="606"/>
    </location>
</feature>
<feature type="region of interest" description="Disordered" evidence="5">
    <location>
        <begin position="1096"/>
        <end position="1132"/>
    </location>
</feature>
<feature type="region of interest" description="Disordered" evidence="5">
    <location>
        <begin position="1250"/>
        <end position="1340"/>
    </location>
</feature>
<feature type="region of interest" description="Disordered" evidence="5">
    <location>
        <begin position="1442"/>
        <end position="1476"/>
    </location>
</feature>
<feature type="region of interest" description="Disordered" evidence="5">
    <location>
        <begin position="1577"/>
        <end position="1596"/>
    </location>
</feature>
<feature type="region of interest" description="Disordered" evidence="5">
    <location>
        <begin position="1795"/>
        <end position="1843"/>
    </location>
</feature>
<feature type="region of interest" description="Disordered" evidence="5">
    <location>
        <begin position="1933"/>
        <end position="2013"/>
    </location>
</feature>
<feature type="region of interest" description="Disordered" evidence="5">
    <location>
        <begin position="2278"/>
        <end position="2300"/>
    </location>
</feature>
<feature type="region of interest" description="Disordered" evidence="5">
    <location>
        <begin position="2318"/>
        <end position="2426"/>
    </location>
</feature>
<feature type="region of interest" description="Disordered" evidence="5">
    <location>
        <begin position="2499"/>
        <end position="2553"/>
    </location>
</feature>
<feature type="region of interest" description="Disordered" evidence="5">
    <location>
        <begin position="2704"/>
        <end position="2788"/>
    </location>
</feature>
<feature type="region of interest" description="Disordered" evidence="5">
    <location>
        <begin position="2820"/>
        <end position="2875"/>
    </location>
</feature>
<feature type="region of interest" description="Disordered" evidence="5">
    <location>
        <begin position="3060"/>
        <end position="3174"/>
    </location>
</feature>
<feature type="region of interest" description="Disordered" evidence="5">
    <location>
        <begin position="3287"/>
        <end position="3343"/>
    </location>
</feature>
<feature type="region of interest" description="Disordered" evidence="5">
    <location>
        <begin position="3449"/>
        <end position="3468"/>
    </location>
</feature>
<feature type="region of interest" description="Disordered" evidence="5">
    <location>
        <begin position="3518"/>
        <end position="3543"/>
    </location>
</feature>
<feature type="coiled-coil region" evidence="2">
    <location>
        <begin position="3271"/>
        <end position="3316"/>
    </location>
</feature>
<feature type="compositionally biased region" description="Polar residues" evidence="5">
    <location>
        <begin position="1"/>
        <end position="28"/>
    </location>
</feature>
<feature type="compositionally biased region" description="Basic and acidic residues" evidence="5">
    <location>
        <begin position="39"/>
        <end position="54"/>
    </location>
</feature>
<feature type="compositionally biased region" description="Basic and acidic residues" evidence="5">
    <location>
        <begin position="434"/>
        <end position="452"/>
    </location>
</feature>
<feature type="compositionally biased region" description="Acidic residues" evidence="5">
    <location>
        <begin position="468"/>
        <end position="479"/>
    </location>
</feature>
<feature type="compositionally biased region" description="Polar residues" evidence="5">
    <location>
        <begin position="585"/>
        <end position="599"/>
    </location>
</feature>
<feature type="compositionally biased region" description="Basic and acidic residues" evidence="5">
    <location>
        <begin position="1111"/>
        <end position="1129"/>
    </location>
</feature>
<feature type="compositionally biased region" description="Basic and acidic residues" evidence="5">
    <location>
        <begin position="1277"/>
        <end position="1306"/>
    </location>
</feature>
<feature type="compositionally biased region" description="Polar residues" evidence="5">
    <location>
        <begin position="1322"/>
        <end position="1340"/>
    </location>
</feature>
<feature type="compositionally biased region" description="Low complexity" evidence="5">
    <location>
        <begin position="1580"/>
        <end position="1596"/>
    </location>
</feature>
<feature type="compositionally biased region" description="Basic and acidic residues" evidence="5">
    <location>
        <begin position="1795"/>
        <end position="1830"/>
    </location>
</feature>
<feature type="compositionally biased region" description="Pro residues" evidence="5">
    <location>
        <begin position="1940"/>
        <end position="1962"/>
    </location>
</feature>
<feature type="compositionally biased region" description="Pro residues" evidence="5">
    <location>
        <begin position="1980"/>
        <end position="2007"/>
    </location>
</feature>
<feature type="compositionally biased region" description="Acidic residues" evidence="5">
    <location>
        <begin position="2281"/>
        <end position="2297"/>
    </location>
</feature>
<feature type="compositionally biased region" description="Low complexity" evidence="5">
    <location>
        <begin position="2318"/>
        <end position="2334"/>
    </location>
</feature>
<feature type="compositionally biased region" description="Basic and acidic residues" evidence="5">
    <location>
        <begin position="2340"/>
        <end position="2357"/>
    </location>
</feature>
<feature type="compositionally biased region" description="Low complexity" evidence="5">
    <location>
        <begin position="2360"/>
        <end position="2373"/>
    </location>
</feature>
<feature type="compositionally biased region" description="Low complexity" evidence="5">
    <location>
        <begin position="2382"/>
        <end position="2413"/>
    </location>
</feature>
<feature type="compositionally biased region" description="Polar residues" evidence="5">
    <location>
        <begin position="2499"/>
        <end position="2509"/>
    </location>
</feature>
<feature type="compositionally biased region" description="Basic and acidic residues" evidence="5">
    <location>
        <begin position="2523"/>
        <end position="2547"/>
    </location>
</feature>
<feature type="compositionally biased region" description="Polar residues" evidence="5">
    <location>
        <begin position="2709"/>
        <end position="2718"/>
    </location>
</feature>
<feature type="compositionally biased region" description="Polar residues" evidence="5">
    <location>
        <begin position="2746"/>
        <end position="2773"/>
    </location>
</feature>
<feature type="compositionally biased region" description="Basic and acidic residues" evidence="5">
    <location>
        <begin position="2820"/>
        <end position="2829"/>
    </location>
</feature>
<feature type="compositionally biased region" description="Low complexity" evidence="5">
    <location>
        <begin position="3084"/>
        <end position="3104"/>
    </location>
</feature>
<feature type="compositionally biased region" description="Pro residues" evidence="5">
    <location>
        <begin position="3105"/>
        <end position="3129"/>
    </location>
</feature>
<feature type="compositionally biased region" description="Basic and acidic residues" evidence="5">
    <location>
        <begin position="3159"/>
        <end position="3174"/>
    </location>
</feature>
<feature type="compositionally biased region" description="Low complexity" evidence="5">
    <location>
        <begin position="3287"/>
        <end position="3305"/>
    </location>
</feature>
<feature type="compositionally biased region" description="Basic and acidic residues" evidence="5">
    <location>
        <begin position="3321"/>
        <end position="3343"/>
    </location>
</feature>
<feature type="compositionally biased region" description="Low complexity" evidence="5">
    <location>
        <begin position="3453"/>
        <end position="3468"/>
    </location>
</feature>
<feature type="sequence conflict" description="In Ref. 2; AAC06188." evidence="6" ref="2">
    <original>K</original>
    <variation>E</variation>
    <location>
        <position position="2823"/>
    </location>
</feature>
<name>ZFHX4_CHICK</name>
<reference key="1">
    <citation type="journal article" date="2004" name="Nature">
        <title>Sequence and comparative analysis of the chicken genome provide unique perspectives on vertebrate evolution.</title>
        <authorList>
            <person name="Hillier L.W."/>
            <person name="Miller W."/>
            <person name="Birney E."/>
            <person name="Warren W."/>
            <person name="Hardison R.C."/>
            <person name="Ponting C.P."/>
            <person name="Bork P."/>
            <person name="Burt D.W."/>
            <person name="Groenen M.A.M."/>
            <person name="Delany M.E."/>
            <person name="Dodgson J.B."/>
            <person name="Chinwalla A.T."/>
            <person name="Cliften P.F."/>
            <person name="Clifton S.W."/>
            <person name="Delehaunty K.D."/>
            <person name="Fronick C."/>
            <person name="Fulton R.S."/>
            <person name="Graves T.A."/>
            <person name="Kremitzki C."/>
            <person name="Layman D."/>
            <person name="Magrini V."/>
            <person name="McPherson J.D."/>
            <person name="Miner T.L."/>
            <person name="Minx P."/>
            <person name="Nash W.E."/>
            <person name="Nhan M.N."/>
            <person name="Nelson J.O."/>
            <person name="Oddy L.G."/>
            <person name="Pohl C.S."/>
            <person name="Randall-Maher J."/>
            <person name="Smith S.M."/>
            <person name="Wallis J.W."/>
            <person name="Yang S.-P."/>
            <person name="Romanov M.N."/>
            <person name="Rondelli C.M."/>
            <person name="Paton B."/>
            <person name="Smith J."/>
            <person name="Morrice D."/>
            <person name="Daniels L."/>
            <person name="Tempest H.G."/>
            <person name="Robertson L."/>
            <person name="Masabanda J.S."/>
            <person name="Griffin D.K."/>
            <person name="Vignal A."/>
            <person name="Fillon V."/>
            <person name="Jacobbson L."/>
            <person name="Kerje S."/>
            <person name="Andersson L."/>
            <person name="Crooijmans R.P."/>
            <person name="Aerts J."/>
            <person name="van der Poel J.J."/>
            <person name="Ellegren H."/>
            <person name="Caldwell R.B."/>
            <person name="Hubbard S.J."/>
            <person name="Grafham D.V."/>
            <person name="Kierzek A.M."/>
            <person name="McLaren S.R."/>
            <person name="Overton I.M."/>
            <person name="Arakawa H."/>
            <person name="Beattie K.J."/>
            <person name="Bezzubov Y."/>
            <person name="Boardman P.E."/>
            <person name="Bonfield J.K."/>
            <person name="Croning M.D.R."/>
            <person name="Davies R.M."/>
            <person name="Francis M.D."/>
            <person name="Humphray S.J."/>
            <person name="Scott C.E."/>
            <person name="Taylor R.G."/>
            <person name="Tickle C."/>
            <person name="Brown W.R.A."/>
            <person name="Rogers J."/>
            <person name="Buerstedde J.-M."/>
            <person name="Wilson S.A."/>
            <person name="Stubbs L."/>
            <person name="Ovcharenko I."/>
            <person name="Gordon L."/>
            <person name="Lucas S."/>
            <person name="Miller M.M."/>
            <person name="Inoko H."/>
            <person name="Shiina T."/>
            <person name="Kaufman J."/>
            <person name="Salomonsen J."/>
            <person name="Skjoedt K."/>
            <person name="Wong G.K.-S."/>
            <person name="Wang J."/>
            <person name="Liu B."/>
            <person name="Wang J."/>
            <person name="Yu J."/>
            <person name="Yang H."/>
            <person name="Nefedov M."/>
            <person name="Koriabine M."/>
            <person name="Dejong P.J."/>
            <person name="Goodstadt L."/>
            <person name="Webber C."/>
            <person name="Dickens N.J."/>
            <person name="Letunic I."/>
            <person name="Suyama M."/>
            <person name="Torrents D."/>
            <person name="von Mering C."/>
            <person name="Zdobnov E.M."/>
            <person name="Makova K."/>
            <person name="Nekrutenko A."/>
            <person name="Elnitski L."/>
            <person name="Eswara P."/>
            <person name="King D.C."/>
            <person name="Yang S.-P."/>
            <person name="Tyekucheva S."/>
            <person name="Radakrishnan A."/>
            <person name="Harris R.S."/>
            <person name="Chiaromonte F."/>
            <person name="Taylor J."/>
            <person name="He J."/>
            <person name="Rijnkels M."/>
            <person name="Griffiths-Jones S."/>
            <person name="Ureta-Vidal A."/>
            <person name="Hoffman M.M."/>
            <person name="Severin J."/>
            <person name="Searle S.M.J."/>
            <person name="Law A.S."/>
            <person name="Speed D."/>
            <person name="Waddington D."/>
            <person name="Cheng Z."/>
            <person name="Tuzun E."/>
            <person name="Eichler E."/>
            <person name="Bao Z."/>
            <person name="Flicek P."/>
            <person name="Shteynberg D.D."/>
            <person name="Brent M.R."/>
            <person name="Bye J.M."/>
            <person name="Huckle E.J."/>
            <person name="Chatterji S."/>
            <person name="Dewey C."/>
            <person name="Pachter L."/>
            <person name="Kouranov A."/>
            <person name="Mourelatos Z."/>
            <person name="Hatzigeorgiou A.G."/>
            <person name="Paterson A.H."/>
            <person name="Ivarie R."/>
            <person name="Brandstrom M."/>
            <person name="Axelsson E."/>
            <person name="Backstrom N."/>
            <person name="Berlin S."/>
            <person name="Webster M.T."/>
            <person name="Pourquie O."/>
            <person name="Reymond A."/>
            <person name="Ucla C."/>
            <person name="Antonarakis S.E."/>
            <person name="Long M."/>
            <person name="Emerson J.J."/>
            <person name="Betran E."/>
            <person name="Dupanloup I."/>
            <person name="Kaessmann H."/>
            <person name="Hinrichs A.S."/>
            <person name="Bejerano G."/>
            <person name="Furey T.S."/>
            <person name="Harte R.A."/>
            <person name="Raney B."/>
            <person name="Siepel A."/>
            <person name="Kent W.J."/>
            <person name="Haussler D."/>
            <person name="Eyras E."/>
            <person name="Castelo R."/>
            <person name="Abril J.F."/>
            <person name="Castellano S."/>
            <person name="Camara F."/>
            <person name="Parra G."/>
            <person name="Guigo R."/>
            <person name="Bourque G."/>
            <person name="Tesler G."/>
            <person name="Pevzner P.A."/>
            <person name="Smit A."/>
            <person name="Fulton L.A."/>
            <person name="Mardis E.R."/>
            <person name="Wilson R.K."/>
        </authorList>
    </citation>
    <scope>NUCLEOTIDE SEQUENCE [LARGE SCALE GENOMIC DNA]</scope>
    <source>
        <strain>Red jungle fowl</strain>
    </source>
</reference>
<reference key="2">
    <citation type="journal article" date="1998" name="Anal. Biochem.">
        <title>Multiplex display polymerase chain reaction amplifies and resolves related sequences sharing a single moderately conserved domain.</title>
        <authorList>
            <person name="Peale F.V. Jr."/>
            <person name="Mason K."/>
            <person name="Hunter A.W."/>
            <person name="Bothwell M."/>
        </authorList>
    </citation>
    <scope>NUCLEOTIDE SEQUENCE [MRNA] OF 2792-2917</scope>
    <source>
        <strain>White leghorn</strain>
        <tissue>Embryo</tissue>
    </source>
</reference>
<keyword id="KW-0175">Coiled coil</keyword>
<keyword id="KW-0238">DNA-binding</keyword>
<keyword id="KW-0371">Homeobox</keyword>
<keyword id="KW-0479">Metal-binding</keyword>
<keyword id="KW-0539">Nucleus</keyword>
<keyword id="KW-1185">Reference proteome</keyword>
<keyword id="KW-0677">Repeat</keyword>
<keyword id="KW-0678">Repressor</keyword>
<keyword id="KW-0804">Transcription</keyword>
<keyword id="KW-0805">Transcription regulation</keyword>
<keyword id="KW-0862">Zinc</keyword>
<keyword id="KW-0863">Zinc-finger</keyword>
<sequence>METCDSPTISRQENGQSTSKLCGTTQLDNEVPEKVAGMEPDRENSSTDDNLRTDERKSEILLGFSVENAAATQVTSAKEIPCNECATSFPSLQKYMEHHCPNARLPVLKDDNESEISELEDSDVENLTGEIVYQPDGSAYIIEDSKESGQNAQTGANSKLFSTAMFLDSLTSAGEKNEQSASAPMSFYPQIINTFHIASSLGKPFTADQAFPNTSALAGVGPVLHSFRVYDLRHKRDKDYLTSDGSAKNSCVSKDVPNNVDLSKFDGCVSDGKRKPVLMCFLCKLSFGYIRSFVTHAVHDHRMTLNEEEQKLLSNKYVSAIIQGIGKDKEPLISFLEPKKSTSVYPHFSTTNLIGPDPTFRGLWSAFHVENGDSLQAGFAFLKGSASTAGSAEQPVGITQMPKAEVNLGGLSSLVANAPITSVSLSHSSSESNKLSESKDQENNCERQKETNTLHPNGEFPIKSEPTEPVEEEDEDTYSNELDDDEVLGELADSIGSKDFPLLNQSISPLSSSVLKFIEKGTSSSSATVSDDTDKTKQTAAHRHNSNVTSNYSISGKDFADASASKDSPTALHPNETARGDEDSSVTPHQHSFTPSTPSAGDGSPGSGIECPKCDTVLGSSRSLGGHMTMMHSRNSCKTLKCPKCNWHYKYQQTLEAHMKEKHPEPGGSCVYCKTGQPHPRLARGESYTCGYKPFRCEVCNYSTTTKGNLSIHMQSDKHLNNVQNLQNGNGEQVYGHTAPPSNPALSGCGTPSPSKPKQKPTWRCEVCDYETNVARNLRIHMTSEKHMHNMMLLQQNMKQIQHNLHLGLAPAEAELYQYYLAQNIGLTGMKLENPADPQMMINPFQLDPATAAALAPGLGELSPYISDPALKLFQCAVCNKFTSDSLEALSVHVSSERLLPEEEWRAVIGDIYQCKLCNYNTQLKANFQLHCKTDKHMQKYQLVAHIKEGGKTNEWRLKCIAIGNPVHLKCNACDYYTNSVDKLRLHTTNHRHEAALKLYKHLQKHESTVNPDSCYYYCALCDYSTKVKLNLVQHVRSVKHQQTEGLRKLQLHQQGLAPEEDNLSEIFFVKDCPPNELEVAQLGCRTCDISLTEQGEDTEGSAKSTSVAIGDDKDSSERDNTEAKKSSKDSVNTVVGAQQLLLAKEEDGAAKKSKPPEDNKFCHEQFYQCPYCNYNSRDPNRIQMHVLSQHSMQPVICCPLCQDVLSNKMHLQLHLTHLHSVSPDCVEKLLMTVPVPDVMMPNSMLLPAAASEKSERDTPATITAEGSGKYSGESPVDEKSTPGTDESKPGMEIKSEEQKPPKESAETPDWNKSGSKDIKTTDSMPDQLNEQQKKQQLSVSDRHVYKYRCNHCSLAFKTMQKLQIHSQYHAIRAATMCSLCQRSFRTFQALKKHLEAGHPELNEAELQQLCASLPVNGELWAEGESMGQDDHALEQEIERDYEMEQEGKASPVGSDSSSIPDDMGSEPKRTLPFRKGPNFTMEKFLDPSRPYKCTVCKESFTQKNILLVHYNSVSHLHKLKKVLQEASSPVPQETNSNTDNKPYKCSICNVAYSQSSTLEIHMRSVLHQTKARAAKLEPSGNISSGNSVAGNVNSPSQGILDSMSLPAVNSKEPHLDAKELNKKQASELISAQPTHHPPQSPAQLQMQLQHELQQQAAFFQPQFLNPAFLPHFPMTPEALLQFQQPQFLFPFYIPGTEFSLSPDLGLPGSATFGMPGMAGMTGSLLEDLKQQIQTQHHVGQTQLQILQQQAQQYQSTQPQLQSQKQQQQSSKLMKAEQTSLVSTDCQLIKDMPSYKESEEISEKQEKPKQEFTNESEGLKENKDMKKPKSSEPAIPPPRIASGARGNAAKALLENFGFELVIQYNENRQKVQKKGKTGEGENTDKLECGTCSKLFSNILILKSHQEHVHGQFFPYGALEKFARQYREAYDKLYPISPSSPETPPPPPPPPPPPPPPPPPTPSQPSSAGAGKIQNTTPTPLQAPPPTPPPPPPPPPPPPPPPPPPSAPPQVQLPVSLDLPLFPPIMMQPVQHPALPPQLALQLPPMDTLSADLTQLCQQQLGLDPNFLRHSQFKRPRTRITDDQLKILRAYFDINNSPSEEQIQEMAEKSGLSQKVIKHWFRNTLFKERQRNKDSPYNFSNPPITVLEDIRIDPQPSAVEPYKSDASFSKRSSRTRFTDYQLRVLQDFFDTNAYPKDDEIEQLSTVLNLPTRVIVVWFQNARQKARKSYENQAETKDNEKRELTNERYIRTSNMQYQCKKCSVVFPRIFDLITHQKKQCYKDEDDDAQDESQTEDSMDASDQTVYKNCTVSGQNDASKSLAVTAASSGSGSSTPLIPSPKPEPEKASPKSESTEKPKPNETISKQTDTTSQSSKPVQSASVTPSDPQPSASQPQQQKQSQIIGRPPSTSQTTPVPSSPLPISMTPLQNSLPPQLLQYQCDQCTVAFPTLELWQEHQHMHFLAAQNQFIHSQFLERPMDMPYMIFDPNNPLMTGQLLNSSLAQMPPQTGSSHAAHPATVSGSMKRKLDDKEDNNCSEKEGGNSGEDQHRDKRLRTTITPEQLEILYEKYLLDSNPTRKMLDHIAREVGLKKRVVQVWFQNTRARERKGQFRAVGPAQSHKRCPFCRALFKAKSALESHIRSRHWNEGKQAGYSLPPSPLISTEDGGDSPQKYIFFDYPSLSLAKTELSSENELASTVSTPISKTAEMSPKNLLSPSSFKAESSEDIENLNAPPADSAYDQNKTDFDETSSINTAISDATTGDEGNNEMESTTGSSGDAKPASPPKEPKPLVNDALTKAATTPTNENTDDKFLFSLTSPSIHFSEKDGDHDQSYYITDDPDDNADRSETSSIADPSSPNPFGASNPFKSKNSDRPGHKRFRTQMSNLQLKVLKACFSDYRTPTMQECEMLGNEIGLPKRVVQVWFQNARAKEKKFKINIGKPFMINQTGPDGTKPECSLCGVKYSARLSIRDHIFSKQHITKVRETVGSQLDREKDYLAPTTVRQLMAQQELDRIKKATDVLGLTVQQPGMMDSSSLHGISLPAAYPGLPGLPPVLLPGMNGPSSLPGFPQSSNTLTSPGAGMLGFPTSATSSPALSLSSAPSKPLLQTPPPPPPPPPPPPPPPPPPPPPPSSSLSGQQTEQQSKESEKKNTINKPNKVKKIKEEELEANKPEKHLKKEEKISSALSVLGKVVGEAHVDPTQLQALQNAIAGDPASFIGGQFLPYFIPGFASYFTPQLPGTVQGGYLPPVCGMESLFPYGPAVPQTIAGLSPGALLQQYQQYQQNLQDSLQKQQKQQQEQQQKQVQAKSSKAENDQQQNSSDTSETKEDRSSATESTKEEPQLDSKSADFSDTYIVPFVKYEFICRKCQMMFTDEDAAVNHQKSFCYFGQPLIDPQETVLRVPVSKYQCLACDVAISGNEALSQHLQSSLHKEKTIKQAMRNAKEHVRLLPHSVCSPNPNTTSTSQSAASSNNTYPHLSCFSMKSWPNILFQASARKAASSPSSPPSLSLPSTVTSSLCSTSGVQTSLPTESCSDESDSELSQKLEDLDNSLEVKAKPASGLDGNFNSIRMDMFSV</sequence>
<organism>
    <name type="scientific">Gallus gallus</name>
    <name type="common">Chicken</name>
    <dbReference type="NCBI Taxonomy" id="9031"/>
    <lineage>
        <taxon>Eukaryota</taxon>
        <taxon>Metazoa</taxon>
        <taxon>Chordata</taxon>
        <taxon>Craniata</taxon>
        <taxon>Vertebrata</taxon>
        <taxon>Euteleostomi</taxon>
        <taxon>Archelosauria</taxon>
        <taxon>Archosauria</taxon>
        <taxon>Dinosauria</taxon>
        <taxon>Saurischia</taxon>
        <taxon>Theropoda</taxon>
        <taxon>Coelurosauria</taxon>
        <taxon>Aves</taxon>
        <taxon>Neognathae</taxon>
        <taxon>Galloanserae</taxon>
        <taxon>Galliformes</taxon>
        <taxon>Phasianidae</taxon>
        <taxon>Phasianinae</taxon>
        <taxon>Gallus</taxon>
    </lineage>
</organism>
<gene>
    <name type="primary">ZFHX4</name>
    <name type="synonym">ZAX</name>
</gene>
<proteinExistence type="evidence at transcript level"/>
<evidence type="ECO:0000250" key="1"/>
<evidence type="ECO:0000255" key="2"/>
<evidence type="ECO:0000255" key="3">
    <source>
        <dbReference type="PROSITE-ProRule" id="PRU00042"/>
    </source>
</evidence>
<evidence type="ECO:0000255" key="4">
    <source>
        <dbReference type="PROSITE-ProRule" id="PRU00108"/>
    </source>
</evidence>
<evidence type="ECO:0000256" key="5">
    <source>
        <dbReference type="SAM" id="MobiDB-lite"/>
    </source>
</evidence>
<evidence type="ECO:0000305" key="6"/>